<proteinExistence type="inferred from homology"/>
<comment type="subcellular location">
    <subcellularLocation>
        <location evidence="1">Cell membrane</location>
        <topology evidence="1">Lipid-anchor</topology>
    </subcellularLocation>
</comment>
<comment type="similarity">
    <text evidence="2">Belongs to the staphylococcal tandem lipoprotein family.</text>
</comment>
<name>Y2451_STAEQ</name>
<gene>
    <name type="ordered locus">SERP2451</name>
</gene>
<reference key="1">
    <citation type="journal article" date="2005" name="J. Bacteriol.">
        <title>Insights on evolution of virulence and resistance from the complete genome analysis of an early methicillin-resistant Staphylococcus aureus strain and a biofilm-producing methicillin-resistant Staphylococcus epidermidis strain.</title>
        <authorList>
            <person name="Gill S.R."/>
            <person name="Fouts D.E."/>
            <person name="Archer G.L."/>
            <person name="Mongodin E.F."/>
            <person name="DeBoy R.T."/>
            <person name="Ravel J."/>
            <person name="Paulsen I.T."/>
            <person name="Kolonay J.F."/>
            <person name="Brinkac L.M."/>
            <person name="Beanan M.J."/>
            <person name="Dodson R.J."/>
            <person name="Daugherty S.C."/>
            <person name="Madupu R."/>
            <person name="Angiuoli S.V."/>
            <person name="Durkin A.S."/>
            <person name="Haft D.H."/>
            <person name="Vamathevan J.J."/>
            <person name="Khouri H."/>
            <person name="Utterback T.R."/>
            <person name="Lee C."/>
            <person name="Dimitrov G."/>
            <person name="Jiang L."/>
            <person name="Qin H."/>
            <person name="Weidman J."/>
            <person name="Tran K."/>
            <person name="Kang K.H."/>
            <person name="Hance I.R."/>
            <person name="Nelson K.E."/>
            <person name="Fraser C.M."/>
        </authorList>
    </citation>
    <scope>NUCLEOTIDE SEQUENCE [LARGE SCALE GENOMIC DNA]</scope>
    <source>
        <strain>ATCC 35984 / DSM 28319 / BCRC 17069 / CCUG 31568 / BM 3577 / RP62A</strain>
    </source>
</reference>
<accession>Q5HK99</accession>
<keyword id="KW-1003">Cell membrane</keyword>
<keyword id="KW-0449">Lipoprotein</keyword>
<keyword id="KW-0472">Membrane</keyword>
<keyword id="KW-0564">Palmitate</keyword>
<keyword id="KW-1185">Reference proteome</keyword>
<keyword id="KW-0732">Signal</keyword>
<feature type="signal peptide" evidence="1">
    <location>
        <begin position="1"/>
        <end position="22"/>
    </location>
</feature>
<feature type="chain" id="PRO_0000282188" description="Uncharacterized lipoprotein SERP2451">
    <location>
        <begin position="23"/>
        <end position="260"/>
    </location>
</feature>
<feature type="lipid moiety-binding region" description="N-palmitoyl cysteine" evidence="1">
    <location>
        <position position="23"/>
    </location>
</feature>
<feature type="lipid moiety-binding region" description="S-diacylglycerol cysteine" evidence="1">
    <location>
        <position position="23"/>
    </location>
</feature>
<protein>
    <recommendedName>
        <fullName>Uncharacterized lipoprotein SERP2451</fullName>
    </recommendedName>
</protein>
<organism>
    <name type="scientific">Staphylococcus epidermidis (strain ATCC 35984 / DSM 28319 / BCRC 17069 / CCUG 31568 / BM 3577 / RP62A)</name>
    <dbReference type="NCBI Taxonomy" id="176279"/>
    <lineage>
        <taxon>Bacteria</taxon>
        <taxon>Bacillati</taxon>
        <taxon>Bacillota</taxon>
        <taxon>Bacilli</taxon>
        <taxon>Bacillales</taxon>
        <taxon>Staphylococcaceae</taxon>
        <taxon>Staphylococcus</taxon>
    </lineage>
</organism>
<dbReference type="EMBL" id="CP000029">
    <property type="protein sequence ID" value="AAW53320.1"/>
    <property type="molecule type" value="Genomic_DNA"/>
</dbReference>
<dbReference type="RefSeq" id="WP_002486030.1">
    <property type="nucleotide sequence ID" value="NC_002976.3"/>
</dbReference>
<dbReference type="SMR" id="Q5HK99"/>
<dbReference type="STRING" id="176279.SERP2451"/>
<dbReference type="KEGG" id="ser:SERP2451"/>
<dbReference type="eggNOG" id="ENOG5033UD8">
    <property type="taxonomic scope" value="Bacteria"/>
</dbReference>
<dbReference type="HOGENOM" id="CLU_071589_0_1_9"/>
<dbReference type="Proteomes" id="UP000000531">
    <property type="component" value="Chromosome"/>
</dbReference>
<dbReference type="GO" id="GO:0005886">
    <property type="term" value="C:plasma membrane"/>
    <property type="evidence" value="ECO:0007669"/>
    <property type="project" value="UniProtKB-SubCell"/>
</dbReference>
<dbReference type="Gene3D" id="2.50.20.40">
    <property type="match status" value="1"/>
</dbReference>
<dbReference type="InterPro" id="IPR007595">
    <property type="entry name" value="Csa"/>
</dbReference>
<dbReference type="InterPro" id="IPR038641">
    <property type="entry name" value="Csa_sf"/>
</dbReference>
<dbReference type="NCBIfam" id="TIGR01742">
    <property type="entry name" value="SA_tandem_lipo"/>
    <property type="match status" value="1"/>
</dbReference>
<dbReference type="Pfam" id="PF04507">
    <property type="entry name" value="DUF576"/>
    <property type="match status" value="1"/>
</dbReference>
<dbReference type="PROSITE" id="PS51257">
    <property type="entry name" value="PROKAR_LIPOPROTEIN"/>
    <property type="match status" value="1"/>
</dbReference>
<sequence>MKHSKKLLLCISFLLITIFISGCGFINKDDSKETEIKKSFNKTLSMYPIKNLEDLYDKEGYRDEEFNKNDKGTWVITSSINIQQKGEGLKTRRMVLFMNRNTRTSKGKFMITEVKEKSDIGFQTRKKEYPVKLIDNKFIPSKQIKDEKIKKEIENFKFFSQYGNFKDLKDYKDGEVSYNPNAPNYSAKYQLSNNDYNVKQIRKRYDIPTEQAPKLLLKGTGDLKGSSTGSKNIEFTFVEKKGENIYFTDSVEYTPSGDDK</sequence>
<evidence type="ECO:0000255" key="1">
    <source>
        <dbReference type="PROSITE-ProRule" id="PRU00303"/>
    </source>
</evidence>
<evidence type="ECO:0000305" key="2"/>